<name>NUOC_RHOPA</name>
<sequence>MDDNGLDTLGQTIVGALPGIATGHSVGFGQLTLTVDAGKIVEVMRLLRDDPRFRFISFIDMTAVDYPGRAERFEIVYHLLSPKLNERVRVKAEVGETTLVPSIIEVFPGADWFEREAYDLYGIVITGHPDMRRLLTDYGFDGHPLRKDFPLTGFVEVRYDDDQKRVIYEPVRLNQEFRKFDFLSPWEGADYPVLPGDEKAGVKS</sequence>
<organism>
    <name type="scientific">Rhodopseudomonas palustris (strain ATCC BAA-98 / CGA009)</name>
    <dbReference type="NCBI Taxonomy" id="258594"/>
    <lineage>
        <taxon>Bacteria</taxon>
        <taxon>Pseudomonadati</taxon>
        <taxon>Pseudomonadota</taxon>
        <taxon>Alphaproteobacteria</taxon>
        <taxon>Hyphomicrobiales</taxon>
        <taxon>Nitrobacteraceae</taxon>
        <taxon>Rhodopseudomonas</taxon>
    </lineage>
</organism>
<dbReference type="EC" id="7.1.1.-" evidence="1"/>
<dbReference type="EMBL" id="BX572602">
    <property type="protein sequence ID" value="CAE28391.1"/>
    <property type="molecule type" value="Genomic_DNA"/>
</dbReference>
<dbReference type="RefSeq" id="WP_011158499.1">
    <property type="nucleotide sequence ID" value="NZ_CP116810.1"/>
</dbReference>
<dbReference type="SMR" id="Q6N5M4"/>
<dbReference type="STRING" id="258594.RPA2950"/>
<dbReference type="GeneID" id="66894033"/>
<dbReference type="eggNOG" id="COG0852">
    <property type="taxonomic scope" value="Bacteria"/>
</dbReference>
<dbReference type="HOGENOM" id="CLU_042628_2_1_5"/>
<dbReference type="PhylomeDB" id="Q6N5M4"/>
<dbReference type="GO" id="GO:0005886">
    <property type="term" value="C:plasma membrane"/>
    <property type="evidence" value="ECO:0007669"/>
    <property type="project" value="UniProtKB-SubCell"/>
</dbReference>
<dbReference type="GO" id="GO:0008137">
    <property type="term" value="F:NADH dehydrogenase (ubiquinone) activity"/>
    <property type="evidence" value="ECO:0007669"/>
    <property type="project" value="InterPro"/>
</dbReference>
<dbReference type="GO" id="GO:0050136">
    <property type="term" value="F:NADH:ubiquinone reductase (non-electrogenic) activity"/>
    <property type="evidence" value="ECO:0007669"/>
    <property type="project" value="UniProtKB-UniRule"/>
</dbReference>
<dbReference type="GO" id="GO:0048038">
    <property type="term" value="F:quinone binding"/>
    <property type="evidence" value="ECO:0007669"/>
    <property type="project" value="UniProtKB-KW"/>
</dbReference>
<dbReference type="Gene3D" id="3.30.460.80">
    <property type="entry name" value="NADH:ubiquinone oxidoreductase, 30kDa subunit"/>
    <property type="match status" value="1"/>
</dbReference>
<dbReference type="HAMAP" id="MF_01357">
    <property type="entry name" value="NDH1_NuoC"/>
    <property type="match status" value="1"/>
</dbReference>
<dbReference type="InterPro" id="IPR010218">
    <property type="entry name" value="NADH_DH_suC"/>
</dbReference>
<dbReference type="InterPro" id="IPR037232">
    <property type="entry name" value="NADH_quin_OxRdtase_su_C/D-like"/>
</dbReference>
<dbReference type="InterPro" id="IPR001268">
    <property type="entry name" value="NADH_UbQ_OxRdtase_30kDa_su"/>
</dbReference>
<dbReference type="InterPro" id="IPR020396">
    <property type="entry name" value="NADH_UbQ_OxRdtase_CS"/>
</dbReference>
<dbReference type="NCBIfam" id="TIGR01961">
    <property type="entry name" value="NuoC_fam"/>
    <property type="match status" value="1"/>
</dbReference>
<dbReference type="NCBIfam" id="NF004733">
    <property type="entry name" value="PRK06074.1-5"/>
    <property type="match status" value="1"/>
</dbReference>
<dbReference type="PANTHER" id="PTHR10884:SF14">
    <property type="entry name" value="NADH DEHYDROGENASE [UBIQUINONE] IRON-SULFUR PROTEIN 3, MITOCHONDRIAL"/>
    <property type="match status" value="1"/>
</dbReference>
<dbReference type="PANTHER" id="PTHR10884">
    <property type="entry name" value="NADH DEHYDROGENASE UBIQUINONE IRON-SULFUR PROTEIN 3"/>
    <property type="match status" value="1"/>
</dbReference>
<dbReference type="Pfam" id="PF00329">
    <property type="entry name" value="Complex1_30kDa"/>
    <property type="match status" value="1"/>
</dbReference>
<dbReference type="SUPFAM" id="SSF143243">
    <property type="entry name" value="Nqo5-like"/>
    <property type="match status" value="1"/>
</dbReference>
<dbReference type="PROSITE" id="PS00542">
    <property type="entry name" value="COMPLEX1_30K"/>
    <property type="match status" value="1"/>
</dbReference>
<keyword id="KW-0997">Cell inner membrane</keyword>
<keyword id="KW-1003">Cell membrane</keyword>
<keyword id="KW-0472">Membrane</keyword>
<keyword id="KW-0520">NAD</keyword>
<keyword id="KW-0874">Quinone</keyword>
<keyword id="KW-1278">Translocase</keyword>
<keyword id="KW-0813">Transport</keyword>
<keyword id="KW-0830">Ubiquinone</keyword>
<protein>
    <recommendedName>
        <fullName evidence="1">NADH-quinone oxidoreductase subunit C</fullName>
        <ecNumber evidence="1">7.1.1.-</ecNumber>
    </recommendedName>
    <alternativeName>
        <fullName evidence="1">NADH dehydrogenase I subunit C</fullName>
    </alternativeName>
    <alternativeName>
        <fullName evidence="1">NDH-1 subunit C</fullName>
    </alternativeName>
</protein>
<comment type="function">
    <text evidence="1">NDH-1 shuttles electrons from NADH, via FMN and iron-sulfur (Fe-S) centers, to quinones in the respiratory chain. The immediate electron acceptor for the enzyme in this species is believed to be ubiquinone. Couples the redox reaction to proton translocation (for every two electrons transferred, four hydrogen ions are translocated across the cytoplasmic membrane), and thus conserves the redox energy in a proton gradient.</text>
</comment>
<comment type="catalytic activity">
    <reaction evidence="1">
        <text>a quinone + NADH + 5 H(+)(in) = a quinol + NAD(+) + 4 H(+)(out)</text>
        <dbReference type="Rhea" id="RHEA:57888"/>
        <dbReference type="ChEBI" id="CHEBI:15378"/>
        <dbReference type="ChEBI" id="CHEBI:24646"/>
        <dbReference type="ChEBI" id="CHEBI:57540"/>
        <dbReference type="ChEBI" id="CHEBI:57945"/>
        <dbReference type="ChEBI" id="CHEBI:132124"/>
    </reaction>
</comment>
<comment type="subunit">
    <text evidence="1">NDH-1 is composed of 14 different subunits. Subunits NuoB, C, D, E, F, and G constitute the peripheral sector of the complex.</text>
</comment>
<comment type="subcellular location">
    <subcellularLocation>
        <location evidence="1">Cell inner membrane</location>
        <topology evidence="1">Peripheral membrane protein</topology>
        <orientation evidence="1">Cytoplasmic side</orientation>
    </subcellularLocation>
</comment>
<comment type="similarity">
    <text evidence="1">Belongs to the complex I 30 kDa subunit family.</text>
</comment>
<reference key="1">
    <citation type="journal article" date="2004" name="Nat. Biotechnol.">
        <title>Complete genome sequence of the metabolically versatile photosynthetic bacterium Rhodopseudomonas palustris.</title>
        <authorList>
            <person name="Larimer F.W."/>
            <person name="Chain P."/>
            <person name="Hauser L."/>
            <person name="Lamerdin J.E."/>
            <person name="Malfatti S."/>
            <person name="Do L."/>
            <person name="Land M.L."/>
            <person name="Pelletier D.A."/>
            <person name="Beatty J.T."/>
            <person name="Lang A.S."/>
            <person name="Tabita F.R."/>
            <person name="Gibson J.L."/>
            <person name="Hanson T.E."/>
            <person name="Bobst C."/>
            <person name="Torres y Torres J.L."/>
            <person name="Peres C."/>
            <person name="Harrison F.H."/>
            <person name="Gibson J."/>
            <person name="Harwood C.S."/>
        </authorList>
    </citation>
    <scope>NUCLEOTIDE SEQUENCE [LARGE SCALE GENOMIC DNA]</scope>
    <source>
        <strain>ATCC BAA-98 / CGA009</strain>
    </source>
</reference>
<evidence type="ECO:0000255" key="1">
    <source>
        <dbReference type="HAMAP-Rule" id="MF_01357"/>
    </source>
</evidence>
<proteinExistence type="inferred from homology"/>
<feature type="chain" id="PRO_0000358187" description="NADH-quinone oxidoreductase subunit C">
    <location>
        <begin position="1"/>
        <end position="204"/>
    </location>
</feature>
<gene>
    <name evidence="1" type="primary">nuoC</name>
    <name type="ordered locus">RPA2950</name>
</gene>
<accession>Q6N5M4</accession>